<evidence type="ECO:0000255" key="1">
    <source>
        <dbReference type="HAMAP-Rule" id="MF_00004"/>
    </source>
</evidence>
<protein>
    <recommendedName>
        <fullName evidence="1">Adenine phosphoribosyltransferase</fullName>
        <shortName evidence="1">APRT</shortName>
        <ecNumber evidence="1">2.4.2.7</ecNumber>
    </recommendedName>
</protein>
<reference key="1">
    <citation type="journal article" date="2011" name="Proc. Natl. Acad. Sci. U.S.A.">
        <title>Genomic anatomy of Escherichia coli O157:H7 outbreaks.</title>
        <authorList>
            <person name="Eppinger M."/>
            <person name="Mammel M.K."/>
            <person name="Leclerc J.E."/>
            <person name="Ravel J."/>
            <person name="Cebula T.A."/>
        </authorList>
    </citation>
    <scope>NUCLEOTIDE SEQUENCE [LARGE SCALE GENOMIC DNA]</scope>
    <source>
        <strain>EC4115 / EHEC</strain>
    </source>
</reference>
<proteinExistence type="inferred from homology"/>
<dbReference type="EC" id="2.4.2.7" evidence="1"/>
<dbReference type="EMBL" id="CP001164">
    <property type="protein sequence ID" value="ACI37693.1"/>
    <property type="molecule type" value="Genomic_DNA"/>
</dbReference>
<dbReference type="RefSeq" id="WP_001301904.1">
    <property type="nucleotide sequence ID" value="NC_011353.1"/>
</dbReference>
<dbReference type="SMR" id="B5Z3X9"/>
<dbReference type="KEGG" id="ecf:ECH74115_0559"/>
<dbReference type="HOGENOM" id="CLU_063339_3_0_6"/>
<dbReference type="UniPathway" id="UPA00588">
    <property type="reaction ID" value="UER00646"/>
</dbReference>
<dbReference type="GO" id="GO:0005737">
    <property type="term" value="C:cytoplasm"/>
    <property type="evidence" value="ECO:0007669"/>
    <property type="project" value="UniProtKB-SubCell"/>
</dbReference>
<dbReference type="GO" id="GO:0002055">
    <property type="term" value="F:adenine binding"/>
    <property type="evidence" value="ECO:0007669"/>
    <property type="project" value="TreeGrafter"/>
</dbReference>
<dbReference type="GO" id="GO:0003999">
    <property type="term" value="F:adenine phosphoribosyltransferase activity"/>
    <property type="evidence" value="ECO:0007669"/>
    <property type="project" value="UniProtKB-UniRule"/>
</dbReference>
<dbReference type="GO" id="GO:0016208">
    <property type="term" value="F:AMP binding"/>
    <property type="evidence" value="ECO:0007669"/>
    <property type="project" value="TreeGrafter"/>
</dbReference>
<dbReference type="GO" id="GO:0006168">
    <property type="term" value="P:adenine salvage"/>
    <property type="evidence" value="ECO:0007669"/>
    <property type="project" value="InterPro"/>
</dbReference>
<dbReference type="GO" id="GO:0044209">
    <property type="term" value="P:AMP salvage"/>
    <property type="evidence" value="ECO:0007669"/>
    <property type="project" value="UniProtKB-UniRule"/>
</dbReference>
<dbReference type="GO" id="GO:0006166">
    <property type="term" value="P:purine ribonucleoside salvage"/>
    <property type="evidence" value="ECO:0007669"/>
    <property type="project" value="UniProtKB-KW"/>
</dbReference>
<dbReference type="CDD" id="cd06223">
    <property type="entry name" value="PRTases_typeI"/>
    <property type="match status" value="1"/>
</dbReference>
<dbReference type="FunFam" id="3.40.50.2020:FF:000004">
    <property type="entry name" value="Adenine phosphoribosyltransferase"/>
    <property type="match status" value="1"/>
</dbReference>
<dbReference type="Gene3D" id="3.40.50.2020">
    <property type="match status" value="1"/>
</dbReference>
<dbReference type="HAMAP" id="MF_00004">
    <property type="entry name" value="Aden_phosphoribosyltr"/>
    <property type="match status" value="1"/>
</dbReference>
<dbReference type="InterPro" id="IPR005764">
    <property type="entry name" value="Ade_phspho_trans"/>
</dbReference>
<dbReference type="InterPro" id="IPR000836">
    <property type="entry name" value="PRibTrfase_dom"/>
</dbReference>
<dbReference type="InterPro" id="IPR029057">
    <property type="entry name" value="PRTase-like"/>
</dbReference>
<dbReference type="InterPro" id="IPR050054">
    <property type="entry name" value="UPRTase/APRTase"/>
</dbReference>
<dbReference type="NCBIfam" id="TIGR01090">
    <property type="entry name" value="apt"/>
    <property type="match status" value="1"/>
</dbReference>
<dbReference type="NCBIfam" id="NF002632">
    <property type="entry name" value="PRK02304.1-1"/>
    <property type="match status" value="1"/>
</dbReference>
<dbReference type="NCBIfam" id="NF002633">
    <property type="entry name" value="PRK02304.1-2"/>
    <property type="match status" value="1"/>
</dbReference>
<dbReference type="NCBIfam" id="NF002634">
    <property type="entry name" value="PRK02304.1-3"/>
    <property type="match status" value="1"/>
</dbReference>
<dbReference type="NCBIfam" id="NF002636">
    <property type="entry name" value="PRK02304.1-5"/>
    <property type="match status" value="1"/>
</dbReference>
<dbReference type="PANTHER" id="PTHR32315">
    <property type="entry name" value="ADENINE PHOSPHORIBOSYLTRANSFERASE"/>
    <property type="match status" value="1"/>
</dbReference>
<dbReference type="PANTHER" id="PTHR32315:SF3">
    <property type="entry name" value="ADENINE PHOSPHORIBOSYLTRANSFERASE"/>
    <property type="match status" value="1"/>
</dbReference>
<dbReference type="Pfam" id="PF00156">
    <property type="entry name" value="Pribosyltran"/>
    <property type="match status" value="1"/>
</dbReference>
<dbReference type="SUPFAM" id="SSF53271">
    <property type="entry name" value="PRTase-like"/>
    <property type="match status" value="1"/>
</dbReference>
<dbReference type="PROSITE" id="PS00103">
    <property type="entry name" value="PUR_PYR_PR_TRANSFER"/>
    <property type="match status" value="1"/>
</dbReference>
<accession>B5Z3X9</accession>
<organism>
    <name type="scientific">Escherichia coli O157:H7 (strain EC4115 / EHEC)</name>
    <dbReference type="NCBI Taxonomy" id="444450"/>
    <lineage>
        <taxon>Bacteria</taxon>
        <taxon>Pseudomonadati</taxon>
        <taxon>Pseudomonadota</taxon>
        <taxon>Gammaproteobacteria</taxon>
        <taxon>Enterobacterales</taxon>
        <taxon>Enterobacteriaceae</taxon>
        <taxon>Escherichia</taxon>
    </lineage>
</organism>
<keyword id="KW-0963">Cytoplasm</keyword>
<keyword id="KW-0328">Glycosyltransferase</keyword>
<keyword id="KW-0660">Purine salvage</keyword>
<keyword id="KW-0808">Transferase</keyword>
<feature type="chain" id="PRO_1000088968" description="Adenine phosphoribosyltransferase">
    <location>
        <begin position="1"/>
        <end position="183"/>
    </location>
</feature>
<gene>
    <name evidence="1" type="primary">apt</name>
    <name type="ordered locus">ECH74115_0559</name>
</gene>
<name>APT_ECO5E</name>
<sequence length="183" mass="19872">MTATAQQLEYLKNSIKSIQDYPKPGILFRDVTSLLEDPKAYALSIDLLVERYKNAGINKVVGTEARGFLFGAPVALGLGVGFVPVRKPGKLPRETISETYDLEYGTDQLEIHVDAIKPGDKVLVVDDLLATGGTIEATVKLIRRLGGEVADAAFIINLFDLGGEQRLEKQGITSYSLVPFPGH</sequence>
<comment type="function">
    <text evidence="1">Catalyzes a salvage reaction resulting in the formation of AMP, that is energically less costly than de novo synthesis.</text>
</comment>
<comment type="catalytic activity">
    <reaction evidence="1">
        <text>AMP + diphosphate = 5-phospho-alpha-D-ribose 1-diphosphate + adenine</text>
        <dbReference type="Rhea" id="RHEA:16609"/>
        <dbReference type="ChEBI" id="CHEBI:16708"/>
        <dbReference type="ChEBI" id="CHEBI:33019"/>
        <dbReference type="ChEBI" id="CHEBI:58017"/>
        <dbReference type="ChEBI" id="CHEBI:456215"/>
        <dbReference type="EC" id="2.4.2.7"/>
    </reaction>
</comment>
<comment type="pathway">
    <text evidence="1">Purine metabolism; AMP biosynthesis via salvage pathway; AMP from adenine: step 1/1.</text>
</comment>
<comment type="subunit">
    <text evidence="1">Homodimer.</text>
</comment>
<comment type="subcellular location">
    <subcellularLocation>
        <location evidence="1">Cytoplasm</location>
    </subcellularLocation>
</comment>
<comment type="similarity">
    <text evidence="1">Belongs to the purine/pyrimidine phosphoribosyltransferase family.</text>
</comment>